<sequence length="61" mass="6716">MKSGKASIKDLAVGKGKDLRWGKGLNAVGVFTDLEIGRQREMSAKSCSTPLYIRRSIQFKS</sequence>
<organism>
    <name type="scientific">Bacillus subtilis (strain 168)</name>
    <dbReference type="NCBI Taxonomy" id="224308"/>
    <lineage>
        <taxon>Bacteria</taxon>
        <taxon>Bacillati</taxon>
        <taxon>Bacillota</taxon>
        <taxon>Bacilli</taxon>
        <taxon>Bacillales</taxon>
        <taxon>Bacillaceae</taxon>
        <taxon>Bacillus</taxon>
    </lineage>
</organism>
<protein>
    <recommendedName>
        <fullName>Uncharacterized protein YczL</fullName>
    </recommendedName>
</protein>
<dbReference type="EMBL" id="AL009126">
    <property type="protein sequence ID" value="CAX52544.1"/>
    <property type="molecule type" value="Genomic_DNA"/>
</dbReference>
<dbReference type="RefSeq" id="WP_003246405.1">
    <property type="nucleotide sequence ID" value="NZ_OZ025638.1"/>
</dbReference>
<dbReference type="RefSeq" id="YP_003097674.1">
    <property type="nucleotide sequence ID" value="NC_000964.3"/>
</dbReference>
<dbReference type="FunCoup" id="C0H3U7">
    <property type="interactions" value="4"/>
</dbReference>
<dbReference type="STRING" id="224308.BSU03359"/>
<dbReference type="PaxDb" id="224308-BSU03359"/>
<dbReference type="EnsemblBacteria" id="CAX52544">
    <property type="protein sequence ID" value="CAX52544"/>
    <property type="gene ID" value="BSU_03359"/>
</dbReference>
<dbReference type="GeneID" id="8303053"/>
<dbReference type="KEGG" id="bsu:BSU03359"/>
<dbReference type="PATRIC" id="fig|224308.179.peg.350"/>
<dbReference type="InParanoid" id="C0H3U7"/>
<dbReference type="OrthoDB" id="9866758at2"/>
<dbReference type="BioCyc" id="BSUB:BSU03359-MONOMER"/>
<dbReference type="Proteomes" id="UP000001570">
    <property type="component" value="Chromosome"/>
</dbReference>
<accession>C0H3U7</accession>
<feature type="chain" id="PRO_0000380070" description="Uncharacterized protein YczL">
    <location>
        <begin position="1"/>
        <end position="61"/>
    </location>
</feature>
<proteinExistence type="predicted"/>
<gene>
    <name type="primary">yczL</name>
    <name type="ordered locus">BSU03359</name>
</gene>
<keyword id="KW-1185">Reference proteome</keyword>
<name>YCZL_BACSU</name>
<reference key="1">
    <citation type="journal article" date="1997" name="Nature">
        <title>The complete genome sequence of the Gram-positive bacterium Bacillus subtilis.</title>
        <authorList>
            <person name="Kunst F."/>
            <person name="Ogasawara N."/>
            <person name="Moszer I."/>
            <person name="Albertini A.M."/>
            <person name="Alloni G."/>
            <person name="Azevedo V."/>
            <person name="Bertero M.G."/>
            <person name="Bessieres P."/>
            <person name="Bolotin A."/>
            <person name="Borchert S."/>
            <person name="Borriss R."/>
            <person name="Boursier L."/>
            <person name="Brans A."/>
            <person name="Braun M."/>
            <person name="Brignell S.C."/>
            <person name="Bron S."/>
            <person name="Brouillet S."/>
            <person name="Bruschi C.V."/>
            <person name="Caldwell B."/>
            <person name="Capuano V."/>
            <person name="Carter N.M."/>
            <person name="Choi S.-K."/>
            <person name="Codani J.-J."/>
            <person name="Connerton I.F."/>
            <person name="Cummings N.J."/>
            <person name="Daniel R.A."/>
            <person name="Denizot F."/>
            <person name="Devine K.M."/>
            <person name="Duesterhoeft A."/>
            <person name="Ehrlich S.D."/>
            <person name="Emmerson P.T."/>
            <person name="Entian K.-D."/>
            <person name="Errington J."/>
            <person name="Fabret C."/>
            <person name="Ferrari E."/>
            <person name="Foulger D."/>
            <person name="Fritz C."/>
            <person name="Fujita M."/>
            <person name="Fujita Y."/>
            <person name="Fuma S."/>
            <person name="Galizzi A."/>
            <person name="Galleron N."/>
            <person name="Ghim S.-Y."/>
            <person name="Glaser P."/>
            <person name="Goffeau A."/>
            <person name="Golightly E.J."/>
            <person name="Grandi G."/>
            <person name="Guiseppi G."/>
            <person name="Guy B.J."/>
            <person name="Haga K."/>
            <person name="Haiech J."/>
            <person name="Harwood C.R."/>
            <person name="Henaut A."/>
            <person name="Hilbert H."/>
            <person name="Holsappel S."/>
            <person name="Hosono S."/>
            <person name="Hullo M.-F."/>
            <person name="Itaya M."/>
            <person name="Jones L.-M."/>
            <person name="Joris B."/>
            <person name="Karamata D."/>
            <person name="Kasahara Y."/>
            <person name="Klaerr-Blanchard M."/>
            <person name="Klein C."/>
            <person name="Kobayashi Y."/>
            <person name="Koetter P."/>
            <person name="Koningstein G."/>
            <person name="Krogh S."/>
            <person name="Kumano M."/>
            <person name="Kurita K."/>
            <person name="Lapidus A."/>
            <person name="Lardinois S."/>
            <person name="Lauber J."/>
            <person name="Lazarevic V."/>
            <person name="Lee S.-M."/>
            <person name="Levine A."/>
            <person name="Liu H."/>
            <person name="Masuda S."/>
            <person name="Mauel C."/>
            <person name="Medigue C."/>
            <person name="Medina N."/>
            <person name="Mellado R.P."/>
            <person name="Mizuno M."/>
            <person name="Moestl D."/>
            <person name="Nakai S."/>
            <person name="Noback M."/>
            <person name="Noone D."/>
            <person name="O'Reilly M."/>
            <person name="Ogawa K."/>
            <person name="Ogiwara A."/>
            <person name="Oudega B."/>
            <person name="Park S.-H."/>
            <person name="Parro V."/>
            <person name="Pohl T.M."/>
            <person name="Portetelle D."/>
            <person name="Porwollik S."/>
            <person name="Prescott A.M."/>
            <person name="Presecan E."/>
            <person name="Pujic P."/>
            <person name="Purnelle B."/>
            <person name="Rapoport G."/>
            <person name="Rey M."/>
            <person name="Reynolds S."/>
            <person name="Rieger M."/>
            <person name="Rivolta C."/>
            <person name="Rocha E."/>
            <person name="Roche B."/>
            <person name="Rose M."/>
            <person name="Sadaie Y."/>
            <person name="Sato T."/>
            <person name="Scanlan E."/>
            <person name="Schleich S."/>
            <person name="Schroeter R."/>
            <person name="Scoffone F."/>
            <person name="Sekiguchi J."/>
            <person name="Sekowska A."/>
            <person name="Seror S.J."/>
            <person name="Serror P."/>
            <person name="Shin B.-S."/>
            <person name="Soldo B."/>
            <person name="Sorokin A."/>
            <person name="Tacconi E."/>
            <person name="Takagi T."/>
            <person name="Takahashi H."/>
            <person name="Takemaru K."/>
            <person name="Takeuchi M."/>
            <person name="Tamakoshi A."/>
            <person name="Tanaka T."/>
            <person name="Terpstra P."/>
            <person name="Tognoni A."/>
            <person name="Tosato V."/>
            <person name="Uchiyama S."/>
            <person name="Vandenbol M."/>
            <person name="Vannier F."/>
            <person name="Vassarotti A."/>
            <person name="Viari A."/>
            <person name="Wambutt R."/>
            <person name="Wedler E."/>
            <person name="Wedler H."/>
            <person name="Weitzenegger T."/>
            <person name="Winters P."/>
            <person name="Wipat A."/>
            <person name="Yamamoto H."/>
            <person name="Yamane K."/>
            <person name="Yasumoto K."/>
            <person name="Yata K."/>
            <person name="Yoshida K."/>
            <person name="Yoshikawa H.-F."/>
            <person name="Zumstein E."/>
            <person name="Yoshikawa H."/>
            <person name="Danchin A."/>
        </authorList>
    </citation>
    <scope>NUCLEOTIDE SEQUENCE [LARGE SCALE GENOMIC DNA]</scope>
    <source>
        <strain>168</strain>
    </source>
</reference>